<dbReference type="PIR" id="A31570">
    <property type="entry name" value="A31570"/>
</dbReference>
<dbReference type="GO" id="GO:0030414">
    <property type="term" value="F:peptidase inhibitor activity"/>
    <property type="evidence" value="ECO:0007669"/>
    <property type="project" value="UniProtKB-KW"/>
</dbReference>
<proteinExistence type="evidence at protein level"/>
<keyword id="KW-0903">Direct protein sequencing</keyword>
<keyword id="KW-0481">Metalloenzyme inhibitor</keyword>
<keyword id="KW-0483">Metalloprotease inhibitor</keyword>
<keyword id="KW-0646">Protease inhibitor</keyword>
<reference key="1">
    <citation type="journal article" date="1988" name="Biochem. Biophys. Res. Commun.">
        <title>Isolation of angiotensin-converting enzyme inhibitor from tuna muscle.</title>
        <authorList>
            <person name="Kohama Y."/>
            <person name="Matsumoto S."/>
            <person name="Oka H."/>
            <person name="Teramoto T."/>
            <person name="Okabe M."/>
            <person name="Mimura T."/>
        </authorList>
    </citation>
    <scope>PROTEIN SEQUENCE</scope>
    <source>
        <tissue>Muscle</tissue>
    </source>
</reference>
<protein>
    <recommendedName>
        <fullName>Angiotensin-converting enzyme inhibitor</fullName>
    </recommendedName>
</protein>
<accession>P18691</accession>
<organism>
    <name type="scientific">Thunnus albacares</name>
    <name type="common">Yellowfin tuna</name>
    <name type="synonym">Neothunnus macropterus</name>
    <dbReference type="NCBI Taxonomy" id="8236"/>
    <lineage>
        <taxon>Eukaryota</taxon>
        <taxon>Metazoa</taxon>
        <taxon>Chordata</taxon>
        <taxon>Craniata</taxon>
        <taxon>Vertebrata</taxon>
        <taxon>Euteleostomi</taxon>
        <taxon>Actinopterygii</taxon>
        <taxon>Neopterygii</taxon>
        <taxon>Teleostei</taxon>
        <taxon>Neoteleostei</taxon>
        <taxon>Acanthomorphata</taxon>
        <taxon>Pelagiaria</taxon>
        <taxon>Scombriformes</taxon>
        <taxon>Scombridae</taxon>
        <taxon>Thunnus</taxon>
    </lineage>
</organism>
<comment type="function">
    <text>Inhibits angiotensin-converting enzyme.</text>
</comment>
<name>ACI_THUAL</name>
<sequence length="8" mass="953">PTHIKWGD</sequence>
<feature type="peptide" id="PRO_0000044102" description="Angiotensin-converting enzyme inhibitor">
    <location>
        <begin position="1"/>
        <end position="8"/>
    </location>
</feature>